<keyword id="KW-0002">3D-structure</keyword>
<keyword id="KW-0007">Acetylation</keyword>
<keyword id="KW-0903">Direct protein sequencing</keyword>
<keyword id="KW-0507">mRNA processing</keyword>
<keyword id="KW-0508">mRNA splicing</keyword>
<keyword id="KW-0539">Nucleus</keyword>
<keyword id="KW-0597">Phosphoprotein</keyword>
<keyword id="KW-1267">Proteomics identification</keyword>
<keyword id="KW-1185">Reference proteome</keyword>
<keyword id="KW-0677">Repeat</keyword>
<keyword id="KW-0694">RNA-binding</keyword>
<keyword id="KW-0747">Spliceosome</keyword>
<gene>
    <name type="primary">SF3B4</name>
    <name type="synonym">SAP49</name>
</gene>
<proteinExistence type="evidence at protein level"/>
<accession>Q15427</accession>
<accession>Q5SZ63</accession>
<organism>
    <name type="scientific">Homo sapiens</name>
    <name type="common">Human</name>
    <dbReference type="NCBI Taxonomy" id="9606"/>
    <lineage>
        <taxon>Eukaryota</taxon>
        <taxon>Metazoa</taxon>
        <taxon>Chordata</taxon>
        <taxon>Craniata</taxon>
        <taxon>Vertebrata</taxon>
        <taxon>Euteleostomi</taxon>
        <taxon>Mammalia</taxon>
        <taxon>Eutheria</taxon>
        <taxon>Euarchontoglires</taxon>
        <taxon>Primates</taxon>
        <taxon>Haplorrhini</taxon>
        <taxon>Catarrhini</taxon>
        <taxon>Hominidae</taxon>
        <taxon>Homo</taxon>
    </lineage>
</organism>
<evidence type="ECO:0000255" key="1">
    <source>
        <dbReference type="PROSITE-ProRule" id="PRU00176"/>
    </source>
</evidence>
<evidence type="ECO:0000256" key="2">
    <source>
        <dbReference type="SAM" id="MobiDB-lite"/>
    </source>
</evidence>
<evidence type="ECO:0000269" key="3">
    <source>
    </source>
</evidence>
<evidence type="ECO:0000269" key="4">
    <source>
    </source>
</evidence>
<evidence type="ECO:0000269" key="5">
    <source>
    </source>
</evidence>
<evidence type="ECO:0000269" key="6">
    <source>
    </source>
</evidence>
<evidence type="ECO:0000269" key="7">
    <source>
    </source>
</evidence>
<evidence type="ECO:0000269" key="8">
    <source>
    </source>
</evidence>
<evidence type="ECO:0000269" key="9">
    <source>
    </source>
</evidence>
<evidence type="ECO:0000269" key="10">
    <source>
    </source>
</evidence>
<evidence type="ECO:0000269" key="11">
    <source>
    </source>
</evidence>
<evidence type="ECO:0000269" key="12">
    <source>
    </source>
</evidence>
<evidence type="ECO:0000269" key="13">
    <source>
    </source>
</evidence>
<evidence type="ECO:0000269" key="14">
    <source ref="5"/>
</evidence>
<evidence type="ECO:0000305" key="15"/>
<evidence type="ECO:0007744" key="16">
    <source>
        <dbReference type="PDB" id="6Y53"/>
    </source>
</evidence>
<evidence type="ECO:0007744" key="17">
    <source>
        <dbReference type="PDB" id="6Y5Q"/>
    </source>
</evidence>
<evidence type="ECO:0007744" key="18">
    <source>
        <dbReference type="PDB" id="7DVQ"/>
    </source>
</evidence>
<evidence type="ECO:0007744" key="19">
    <source>
        <dbReference type="PDB" id="8HK1"/>
    </source>
</evidence>
<evidence type="ECO:0007744" key="20">
    <source>
    </source>
</evidence>
<evidence type="ECO:0007744" key="21">
    <source>
    </source>
</evidence>
<evidence type="ECO:0007744" key="22">
    <source>
    </source>
</evidence>
<evidence type="ECO:0007744" key="23">
    <source>
    </source>
</evidence>
<evidence type="ECO:0007829" key="24">
    <source>
        <dbReference type="PDB" id="7EVO"/>
    </source>
</evidence>
<evidence type="ECO:0007829" key="25">
    <source>
        <dbReference type="PDB" id="7ONB"/>
    </source>
</evidence>
<evidence type="ECO:0007829" key="26">
    <source>
        <dbReference type="PDB" id="7QTT"/>
    </source>
</evidence>
<sequence length="424" mass="44386">MAAGPISERNQDATVYVGGLDEKVSEPLLWELFLQAGPVVNTHMPKDRVTGQHQGYGFVEFLSEEDADYAIKIMNMIKLYGKPIRVNKASAHNKNLDVGANIFIGNLDPEIDEKLLYDTFSAFGVILQTPKIMRDPDTGNSKGYAFINFASFDASDAAIEAMNGQYLCNRPITVSYAFKKDSKGERHGSAAERLLAAQNPLSQADRPHQLFADAPPPPSAPNPVVSSLGSGLPPPGMPPPGSFPPPVPPPGALPPGIPPAMPPPPMPPGAAGHGPPSAGTPGAGHPGHGHSHPHPFPPGGMPHPGMSQMQLAHHGPHGLGHPHAGPPGSGGQPPPRPPPGMPHPGPPPMGMPPRGPPFGSPMGHPGPMPPHGMRGPPPLMPPHGYTGPPRPPPYGYQRGPLPPPRPTPRPPVPPRGPLRGPLPQ</sequence>
<dbReference type="EMBL" id="L35013">
    <property type="protein sequence ID" value="AAA60300.1"/>
    <property type="molecule type" value="Genomic_DNA"/>
</dbReference>
<dbReference type="EMBL" id="AL591493">
    <property type="protein sequence ID" value="CAI12554.1"/>
    <property type="molecule type" value="Genomic_DNA"/>
</dbReference>
<dbReference type="EMBL" id="AL590487">
    <property type="protein sequence ID" value="CAI12554.1"/>
    <property type="status" value="JOINED"/>
    <property type="molecule type" value="Genomic_DNA"/>
</dbReference>
<dbReference type="EMBL" id="AL590487">
    <property type="protein sequence ID" value="CAI12648.1"/>
    <property type="molecule type" value="Genomic_DNA"/>
</dbReference>
<dbReference type="EMBL" id="AL591493">
    <property type="protein sequence ID" value="CAI12648.1"/>
    <property type="status" value="JOINED"/>
    <property type="molecule type" value="Genomic_DNA"/>
</dbReference>
<dbReference type="EMBL" id="CH471121">
    <property type="protein sequence ID" value="EAW53595.1"/>
    <property type="molecule type" value="Genomic_DNA"/>
</dbReference>
<dbReference type="EMBL" id="BC004273">
    <property type="protein sequence ID" value="AAH04273.1"/>
    <property type="molecule type" value="mRNA"/>
</dbReference>
<dbReference type="EMBL" id="BC013886">
    <property type="protein sequence ID" value="AAH13886.1"/>
    <property type="molecule type" value="mRNA"/>
</dbReference>
<dbReference type="EMBL" id="BC090883">
    <property type="protein sequence ID" value="AAH90883.1"/>
    <property type="molecule type" value="mRNA"/>
</dbReference>
<dbReference type="CCDS" id="CCDS72900.1"/>
<dbReference type="PIR" id="A54964">
    <property type="entry name" value="A54964"/>
</dbReference>
<dbReference type="RefSeq" id="NP_005841.1">
    <property type="nucleotide sequence ID" value="NM_005850.5"/>
</dbReference>
<dbReference type="RefSeq" id="XP_054189768.1">
    <property type="nucleotide sequence ID" value="XM_054333793.1"/>
</dbReference>
<dbReference type="PDB" id="1X5T">
    <property type="method" value="NMR"/>
    <property type="chains" value="A=102-184"/>
</dbReference>
<dbReference type="PDB" id="5GVQ">
    <property type="method" value="NMR"/>
    <property type="chains" value="A=5-96"/>
</dbReference>
<dbReference type="PDB" id="5Z56">
    <property type="method" value="EM"/>
    <property type="resolution" value="5.10 A"/>
    <property type="chains" value="4=1-424"/>
</dbReference>
<dbReference type="PDB" id="5Z57">
    <property type="method" value="EM"/>
    <property type="resolution" value="6.50 A"/>
    <property type="chains" value="4=1-424"/>
</dbReference>
<dbReference type="PDB" id="5Z58">
    <property type="method" value="EM"/>
    <property type="resolution" value="4.90 A"/>
    <property type="chains" value="4=1-424"/>
</dbReference>
<dbReference type="PDB" id="6AH0">
    <property type="method" value="EM"/>
    <property type="resolution" value="5.70 A"/>
    <property type="chains" value="4=1-424"/>
</dbReference>
<dbReference type="PDB" id="6AHD">
    <property type="method" value="EM"/>
    <property type="resolution" value="3.80 A"/>
    <property type="chains" value="4=1-424"/>
</dbReference>
<dbReference type="PDB" id="6QX9">
    <property type="method" value="EM"/>
    <property type="resolution" value="3.28 A"/>
    <property type="chains" value="B4=1-424"/>
</dbReference>
<dbReference type="PDB" id="6Y53">
    <property type="method" value="EM"/>
    <property type="resolution" value="7.10 A"/>
    <property type="chains" value="o=1-424"/>
</dbReference>
<dbReference type="PDB" id="6Y5Q">
    <property type="method" value="EM"/>
    <property type="resolution" value="7.10 A"/>
    <property type="chains" value="o=1-424"/>
</dbReference>
<dbReference type="PDB" id="7ABG">
    <property type="method" value="EM"/>
    <property type="resolution" value="7.80 A"/>
    <property type="chains" value="w=1-424"/>
</dbReference>
<dbReference type="PDB" id="7ABH">
    <property type="method" value="EM"/>
    <property type="resolution" value="4.50 A"/>
    <property type="chains" value="w=1-424"/>
</dbReference>
<dbReference type="PDB" id="7ABI">
    <property type="method" value="EM"/>
    <property type="resolution" value="8.00 A"/>
    <property type="chains" value="w=1-424"/>
</dbReference>
<dbReference type="PDB" id="7DVQ">
    <property type="method" value="EM"/>
    <property type="resolution" value="2.89 A"/>
    <property type="chains" value="4=1-424"/>
</dbReference>
<dbReference type="PDB" id="7EVO">
    <property type="method" value="EM"/>
    <property type="resolution" value="2.50 A"/>
    <property type="chains" value="4=1-424"/>
</dbReference>
<dbReference type="PDB" id="7ONB">
    <property type="method" value="EM"/>
    <property type="resolution" value="3.10 A"/>
    <property type="chains" value="K=1-424"/>
</dbReference>
<dbReference type="PDB" id="7QTT">
    <property type="method" value="EM"/>
    <property type="resolution" value="3.10 A"/>
    <property type="chains" value="F=1-424"/>
</dbReference>
<dbReference type="PDB" id="7VPX">
    <property type="method" value="EM"/>
    <property type="resolution" value="3.00 A"/>
    <property type="chains" value="4=1-424"/>
</dbReference>
<dbReference type="PDB" id="8CH6">
    <property type="method" value="EM"/>
    <property type="resolution" value="5.90 A"/>
    <property type="chains" value="F=1-424"/>
</dbReference>
<dbReference type="PDB" id="8H6E">
    <property type="method" value="EM"/>
    <property type="resolution" value="3.20 A"/>
    <property type="chains" value="2J=1-424"/>
</dbReference>
<dbReference type="PDB" id="8H6J">
    <property type="method" value="EM"/>
    <property type="resolution" value="3.25 A"/>
    <property type="chains" value="2J=1-424"/>
</dbReference>
<dbReference type="PDB" id="8H6K">
    <property type="method" value="EM"/>
    <property type="resolution" value="2.70 A"/>
    <property type="chains" value="2J=1-424"/>
</dbReference>
<dbReference type="PDB" id="8H6L">
    <property type="method" value="EM"/>
    <property type="resolution" value="2.60 A"/>
    <property type="chains" value="2J=1-424"/>
</dbReference>
<dbReference type="PDB" id="8HK1">
    <property type="method" value="EM"/>
    <property type="resolution" value="2.70 A"/>
    <property type="chains" value="4=1-424"/>
</dbReference>
<dbReference type="PDB" id="8I0P">
    <property type="method" value="EM"/>
    <property type="resolution" value="3.40 A"/>
    <property type="chains" value="4=1-424"/>
</dbReference>
<dbReference type="PDB" id="8I0R">
    <property type="method" value="EM"/>
    <property type="resolution" value="3.00 A"/>
    <property type="chains" value="4=1-424"/>
</dbReference>
<dbReference type="PDB" id="8I0S">
    <property type="method" value="EM"/>
    <property type="resolution" value="4.20 A"/>
    <property type="chains" value="4=1-424"/>
</dbReference>
<dbReference type="PDB" id="8I0T">
    <property type="method" value="EM"/>
    <property type="resolution" value="3.00 A"/>
    <property type="chains" value="4=1-424"/>
</dbReference>
<dbReference type="PDB" id="8I0U">
    <property type="method" value="EM"/>
    <property type="resolution" value="3.30 A"/>
    <property type="chains" value="4=1-424"/>
</dbReference>
<dbReference type="PDB" id="8I0V">
    <property type="method" value="EM"/>
    <property type="resolution" value="3.00 A"/>
    <property type="chains" value="4=1-424"/>
</dbReference>
<dbReference type="PDB" id="8QO9">
    <property type="method" value="EM"/>
    <property type="resolution" value="5.29 A"/>
    <property type="chains" value="B4=1-424"/>
</dbReference>
<dbReference type="PDB" id="8QXD">
    <property type="method" value="EM"/>
    <property type="resolution" value="9.60 A"/>
    <property type="chains" value="B4=1-424"/>
</dbReference>
<dbReference type="PDB" id="8QZS">
    <property type="method" value="EM"/>
    <property type="resolution" value="4.10 A"/>
    <property type="chains" value="B4=1-424"/>
</dbReference>
<dbReference type="PDB" id="8R08">
    <property type="method" value="EM"/>
    <property type="resolution" value="6.10 A"/>
    <property type="chains" value="B4=1-424"/>
</dbReference>
<dbReference type="PDB" id="8R09">
    <property type="method" value="EM"/>
    <property type="resolution" value="4.30 A"/>
    <property type="chains" value="B4=1-424"/>
</dbReference>
<dbReference type="PDB" id="8R0A">
    <property type="method" value="EM"/>
    <property type="resolution" value="5.80 A"/>
    <property type="chains" value="B4=1-424"/>
</dbReference>
<dbReference type="PDB" id="8R0B">
    <property type="method" value="EM"/>
    <property type="resolution" value="4.40 A"/>
    <property type="chains" value="B4=1-424"/>
</dbReference>
<dbReference type="PDB" id="8RM5">
    <property type="method" value="EM"/>
    <property type="resolution" value="6.90 A"/>
    <property type="chains" value="B4=1-424"/>
</dbReference>
<dbReference type="PDB" id="8Y7E">
    <property type="method" value="EM"/>
    <property type="resolution" value="4.66 A"/>
    <property type="chains" value="4=1-424"/>
</dbReference>
<dbReference type="PDBsum" id="1X5T"/>
<dbReference type="PDBsum" id="5GVQ"/>
<dbReference type="PDBsum" id="5Z56"/>
<dbReference type="PDBsum" id="5Z57"/>
<dbReference type="PDBsum" id="5Z58"/>
<dbReference type="PDBsum" id="6AH0"/>
<dbReference type="PDBsum" id="6AHD"/>
<dbReference type="PDBsum" id="6QX9"/>
<dbReference type="PDBsum" id="6Y53"/>
<dbReference type="PDBsum" id="6Y5Q"/>
<dbReference type="PDBsum" id="7ABG"/>
<dbReference type="PDBsum" id="7ABH"/>
<dbReference type="PDBsum" id="7ABI"/>
<dbReference type="PDBsum" id="7DVQ"/>
<dbReference type="PDBsum" id="7EVO"/>
<dbReference type="PDBsum" id="7ONB"/>
<dbReference type="PDBsum" id="7QTT"/>
<dbReference type="PDBsum" id="7VPX"/>
<dbReference type="PDBsum" id="8CH6"/>
<dbReference type="PDBsum" id="8H6E"/>
<dbReference type="PDBsum" id="8H6J"/>
<dbReference type="PDBsum" id="8H6K"/>
<dbReference type="PDBsum" id="8H6L"/>
<dbReference type="PDBsum" id="8HK1"/>
<dbReference type="PDBsum" id="8I0P"/>
<dbReference type="PDBsum" id="8I0R"/>
<dbReference type="PDBsum" id="8I0S"/>
<dbReference type="PDBsum" id="8I0T"/>
<dbReference type="PDBsum" id="8I0U"/>
<dbReference type="PDBsum" id="8I0V"/>
<dbReference type="PDBsum" id="8QO9"/>
<dbReference type="PDBsum" id="8QXD"/>
<dbReference type="PDBsum" id="8QZS"/>
<dbReference type="PDBsum" id="8R08"/>
<dbReference type="PDBsum" id="8R09"/>
<dbReference type="PDBsum" id="8R0A"/>
<dbReference type="PDBsum" id="8R0B"/>
<dbReference type="PDBsum" id="8RM5"/>
<dbReference type="PDBsum" id="8Y7E"/>
<dbReference type="EMDB" id="EMD-10689"/>
<dbReference type="EMDB" id="EMD-11695"/>
<dbReference type="EMDB" id="EMD-11696"/>
<dbReference type="EMDB" id="EMD-11697"/>
<dbReference type="EMDB" id="EMD-12994"/>
<dbReference type="EMDB" id="EMD-14146"/>
<dbReference type="EMDB" id="EMD-16658"/>
<dbReference type="EMDB" id="EMD-18529"/>
<dbReference type="EMDB" id="EMD-18718"/>
<dbReference type="EMDB" id="EMD-18781"/>
<dbReference type="EMDB" id="EMD-18786"/>
<dbReference type="EMDB" id="EMD-18787"/>
<dbReference type="EMDB" id="EMD-18788"/>
<dbReference type="EMDB" id="EMD-18789"/>
<dbReference type="EMDB" id="EMD-19349"/>
<dbReference type="EMDB" id="EMD-30875"/>
<dbReference type="EMDB" id="EMD-31334"/>
<dbReference type="EMDB" id="EMD-32074"/>
<dbReference type="EMDB" id="EMD-34500"/>
<dbReference type="EMDB" id="EMD-34505"/>
<dbReference type="EMDB" id="EMD-34507"/>
<dbReference type="EMDB" id="EMD-34508"/>
<dbReference type="EMDB" id="EMD-34841"/>
<dbReference type="EMDB" id="EMD-35105"/>
<dbReference type="EMDB" id="EMD-35107"/>
<dbReference type="EMDB" id="EMD-35108"/>
<dbReference type="EMDB" id="EMD-35109"/>
<dbReference type="EMDB" id="EMD-35110"/>
<dbReference type="EMDB" id="EMD-35111"/>
<dbReference type="EMDB" id="EMD-39013"/>
<dbReference type="EMDB" id="EMD-4665"/>
<dbReference type="EMDB" id="EMD-6889"/>
<dbReference type="EMDB" id="EMD-6890"/>
<dbReference type="EMDB" id="EMD-6891"/>
<dbReference type="EMDB" id="EMD-9621"/>
<dbReference type="EMDB" id="EMD-9624"/>
<dbReference type="SMR" id="Q15427"/>
<dbReference type="BioGRID" id="115554">
    <property type="interactions" value="403"/>
</dbReference>
<dbReference type="ComplexPortal" id="CPX-2227">
    <property type="entry name" value="SF3B complex"/>
</dbReference>
<dbReference type="ComplexPortal" id="CPX-2539">
    <property type="entry name" value="U2 small nuclear ribonucleoprotein complex"/>
</dbReference>
<dbReference type="CORUM" id="Q15427"/>
<dbReference type="FunCoup" id="Q15427">
    <property type="interactions" value="2950"/>
</dbReference>
<dbReference type="IntAct" id="Q15427">
    <property type="interactions" value="697"/>
</dbReference>
<dbReference type="MINT" id="Q15427"/>
<dbReference type="STRING" id="9606.ENSP00000271628"/>
<dbReference type="GlyGen" id="Q15427">
    <property type="glycosylation" value="3 sites, 1 O-linked glycan (1 site)"/>
</dbReference>
<dbReference type="iPTMnet" id="Q15427"/>
<dbReference type="PhosphoSitePlus" id="Q15427"/>
<dbReference type="SwissPalm" id="Q15427"/>
<dbReference type="BioMuta" id="SF3B4"/>
<dbReference type="DMDM" id="2500587"/>
<dbReference type="jPOST" id="Q15427"/>
<dbReference type="MassIVE" id="Q15427"/>
<dbReference type="PaxDb" id="9606-ENSP00000271628"/>
<dbReference type="PeptideAtlas" id="Q15427"/>
<dbReference type="ProteomicsDB" id="60587"/>
<dbReference type="Pumba" id="Q15427"/>
<dbReference type="Antibodypedia" id="20268">
    <property type="antibodies" value="327 antibodies from 36 providers"/>
</dbReference>
<dbReference type="DNASU" id="10262"/>
<dbReference type="Ensembl" id="ENST00000271628.9">
    <property type="protein sequence ID" value="ENSP00000271628.8"/>
    <property type="gene ID" value="ENSG00000143368.10"/>
</dbReference>
<dbReference type="GeneID" id="10262"/>
<dbReference type="KEGG" id="hsa:10262"/>
<dbReference type="MANE-Select" id="ENST00000271628.9">
    <property type="protein sequence ID" value="ENSP00000271628.8"/>
    <property type="RefSeq nucleotide sequence ID" value="NM_005850.5"/>
    <property type="RefSeq protein sequence ID" value="NP_005841.1"/>
</dbReference>
<dbReference type="UCSC" id="uc001etk.3">
    <property type="organism name" value="human"/>
</dbReference>
<dbReference type="AGR" id="HGNC:10771"/>
<dbReference type="CTD" id="10262"/>
<dbReference type="DisGeNET" id="10262"/>
<dbReference type="GeneCards" id="SF3B4"/>
<dbReference type="HGNC" id="HGNC:10771">
    <property type="gene designation" value="SF3B4"/>
</dbReference>
<dbReference type="HPA" id="ENSG00000143368">
    <property type="expression patterns" value="Low tissue specificity"/>
</dbReference>
<dbReference type="MalaCards" id="SF3B4"/>
<dbReference type="MIM" id="154400">
    <property type="type" value="phenotype"/>
</dbReference>
<dbReference type="MIM" id="605593">
    <property type="type" value="gene"/>
</dbReference>
<dbReference type="neXtProt" id="NX_Q15427"/>
<dbReference type="OpenTargets" id="ENSG00000143368"/>
<dbReference type="Orphanet" id="1788">
    <property type="disease" value="Acrofacial dysostosis, Rodriguez type"/>
</dbReference>
<dbReference type="Orphanet" id="245">
    <property type="disease" value="Nager syndrome"/>
</dbReference>
<dbReference type="PharmGKB" id="PA35689"/>
<dbReference type="VEuPathDB" id="HostDB:ENSG00000143368"/>
<dbReference type="eggNOG" id="KOG0131">
    <property type="taxonomic scope" value="Eukaryota"/>
</dbReference>
<dbReference type="GeneTree" id="ENSGT00870000136537"/>
<dbReference type="HOGENOM" id="CLU_012062_21_0_1"/>
<dbReference type="InParanoid" id="Q15427"/>
<dbReference type="OMA" id="AMVYEIM"/>
<dbReference type="OrthoDB" id="10259687at2759"/>
<dbReference type="PAN-GO" id="Q15427">
    <property type="GO annotations" value="3 GO annotations based on evolutionary models"/>
</dbReference>
<dbReference type="PhylomeDB" id="Q15427"/>
<dbReference type="TreeFam" id="TF300890"/>
<dbReference type="PathwayCommons" id="Q15427"/>
<dbReference type="Reactome" id="R-HSA-72163">
    <property type="pathway name" value="mRNA Splicing - Major Pathway"/>
</dbReference>
<dbReference type="Reactome" id="R-HSA-72165">
    <property type="pathway name" value="mRNA Splicing - Minor Pathway"/>
</dbReference>
<dbReference type="SignaLink" id="Q15427"/>
<dbReference type="SIGNOR" id="Q15427"/>
<dbReference type="BioGRID-ORCS" id="10262">
    <property type="hits" value="822 hits in 1169 CRISPR screens"/>
</dbReference>
<dbReference type="ChiTaRS" id="SF3B4">
    <property type="organism name" value="human"/>
</dbReference>
<dbReference type="EvolutionaryTrace" id="Q15427"/>
<dbReference type="GeneWiki" id="SF3B4"/>
<dbReference type="GenomeRNAi" id="10262"/>
<dbReference type="Pharos" id="Q15427">
    <property type="development level" value="Tbio"/>
</dbReference>
<dbReference type="PRO" id="PR:Q15427"/>
<dbReference type="Proteomes" id="UP000005640">
    <property type="component" value="Chromosome 1"/>
</dbReference>
<dbReference type="RNAct" id="Q15427">
    <property type="molecule type" value="protein"/>
</dbReference>
<dbReference type="Bgee" id="ENSG00000143368">
    <property type="expression patterns" value="Expressed in mucosa of transverse colon and 176 other cell types or tissues"/>
</dbReference>
<dbReference type="ExpressionAtlas" id="Q15427">
    <property type="expression patterns" value="baseline and differential"/>
</dbReference>
<dbReference type="GO" id="GO:0005654">
    <property type="term" value="C:nucleoplasm"/>
    <property type="evidence" value="ECO:0000304"/>
    <property type="project" value="Reactome"/>
</dbReference>
<dbReference type="GO" id="GO:0005634">
    <property type="term" value="C:nucleus"/>
    <property type="evidence" value="ECO:0000314"/>
    <property type="project" value="UniProtKB"/>
</dbReference>
<dbReference type="GO" id="GO:0071011">
    <property type="term" value="C:precatalytic spliceosome"/>
    <property type="evidence" value="ECO:0000318"/>
    <property type="project" value="GO_Central"/>
</dbReference>
<dbReference type="GO" id="GO:0005681">
    <property type="term" value="C:spliceosomal complex"/>
    <property type="evidence" value="ECO:0000314"/>
    <property type="project" value="HGNC-UCL"/>
</dbReference>
<dbReference type="GO" id="GO:0005689">
    <property type="term" value="C:U12-type spliceosomal complex"/>
    <property type="evidence" value="ECO:0000314"/>
    <property type="project" value="UniProtKB"/>
</dbReference>
<dbReference type="GO" id="GO:0005686">
    <property type="term" value="C:U2 snRNP"/>
    <property type="evidence" value="ECO:0000318"/>
    <property type="project" value="GO_Central"/>
</dbReference>
<dbReference type="GO" id="GO:0071005">
    <property type="term" value="C:U2-type precatalytic spliceosome"/>
    <property type="evidence" value="ECO:0000314"/>
    <property type="project" value="UniProtKB"/>
</dbReference>
<dbReference type="GO" id="GO:0005684">
    <property type="term" value="C:U2-type spliceosomal complex"/>
    <property type="evidence" value="ECO:0000314"/>
    <property type="project" value="UniProtKB"/>
</dbReference>
<dbReference type="GO" id="GO:0003723">
    <property type="term" value="F:RNA binding"/>
    <property type="evidence" value="ECO:0007005"/>
    <property type="project" value="UniProtKB"/>
</dbReference>
<dbReference type="GO" id="GO:1990935">
    <property type="term" value="F:splicing factor binding"/>
    <property type="evidence" value="ECO:0000314"/>
    <property type="project" value="UniProtKB"/>
</dbReference>
<dbReference type="GO" id="GO:0006397">
    <property type="term" value="P:mRNA processing"/>
    <property type="evidence" value="ECO:0000304"/>
    <property type="project" value="ProtInc"/>
</dbReference>
<dbReference type="GO" id="GO:0000398">
    <property type="term" value="P:mRNA splicing, via spliceosome"/>
    <property type="evidence" value="ECO:0000314"/>
    <property type="project" value="UniProtKB"/>
</dbReference>
<dbReference type="GO" id="GO:0008380">
    <property type="term" value="P:RNA splicing"/>
    <property type="evidence" value="ECO:0000304"/>
    <property type="project" value="ProtInc"/>
</dbReference>
<dbReference type="GO" id="GO:0000375">
    <property type="term" value="P:RNA splicing, via transesterification reactions"/>
    <property type="evidence" value="ECO:0000304"/>
    <property type="project" value="ProtInc"/>
</dbReference>
<dbReference type="GO" id="GO:1903241">
    <property type="term" value="P:U2-type prespliceosome assembly"/>
    <property type="evidence" value="ECO:0000303"/>
    <property type="project" value="ComplexPortal"/>
</dbReference>
<dbReference type="CDD" id="cd12334">
    <property type="entry name" value="RRM1_SF3B4"/>
    <property type="match status" value="1"/>
</dbReference>
<dbReference type="CDD" id="cd12335">
    <property type="entry name" value="RRM2_SF3B4"/>
    <property type="match status" value="1"/>
</dbReference>
<dbReference type="FunFam" id="3.30.70.330:FF:000141">
    <property type="entry name" value="Splicing factor 3b subunit 4"/>
    <property type="match status" value="1"/>
</dbReference>
<dbReference type="FunFam" id="3.30.70.330:FF:000059">
    <property type="entry name" value="splicing factor 3B subunit 4"/>
    <property type="match status" value="1"/>
</dbReference>
<dbReference type="Gene3D" id="3.30.70.330">
    <property type="match status" value="2"/>
</dbReference>
<dbReference type="InterPro" id="IPR012677">
    <property type="entry name" value="Nucleotide-bd_a/b_plait_sf"/>
</dbReference>
<dbReference type="InterPro" id="IPR035979">
    <property type="entry name" value="RBD_domain_sf"/>
</dbReference>
<dbReference type="InterPro" id="IPR000504">
    <property type="entry name" value="RRM_dom"/>
</dbReference>
<dbReference type="InterPro" id="IPR034158">
    <property type="entry name" value="SF3B4_RRM1"/>
</dbReference>
<dbReference type="InterPro" id="IPR034159">
    <property type="entry name" value="SF3B4_RRM2"/>
</dbReference>
<dbReference type="InterPro" id="IPR052084">
    <property type="entry name" value="SF3B4_spliceosome_assoc"/>
</dbReference>
<dbReference type="PANTHER" id="PTHR48030">
    <property type="entry name" value="SPLICING FACTOR 3B SUBUNIT 4"/>
    <property type="match status" value="1"/>
</dbReference>
<dbReference type="PANTHER" id="PTHR48030:SF3">
    <property type="entry name" value="SPLICING FACTOR 3B SUBUNIT 4"/>
    <property type="match status" value="1"/>
</dbReference>
<dbReference type="Pfam" id="PF00076">
    <property type="entry name" value="RRM_1"/>
    <property type="match status" value="2"/>
</dbReference>
<dbReference type="PRINTS" id="PR01217">
    <property type="entry name" value="PRICHEXTENSN"/>
</dbReference>
<dbReference type="SMART" id="SM00360">
    <property type="entry name" value="RRM"/>
    <property type="match status" value="2"/>
</dbReference>
<dbReference type="SUPFAM" id="SSF54928">
    <property type="entry name" value="RNA-binding domain, RBD"/>
    <property type="match status" value="1"/>
</dbReference>
<dbReference type="PROSITE" id="PS50102">
    <property type="entry name" value="RRM"/>
    <property type="match status" value="2"/>
</dbReference>
<feature type="initiator methionine" description="Removed" evidence="14 21 22 23">
    <location>
        <position position="1"/>
    </location>
</feature>
<feature type="chain" id="PRO_0000081955" description="Splicing factor 3B subunit 4">
    <location>
        <begin position="2"/>
        <end position="424"/>
    </location>
</feature>
<feature type="domain" description="RRM 1" evidence="1">
    <location>
        <begin position="13"/>
        <end position="91"/>
    </location>
</feature>
<feature type="domain" description="RRM 2" evidence="1">
    <location>
        <begin position="100"/>
        <end position="179"/>
    </location>
</feature>
<feature type="region of interest" description="Disordered" evidence="2">
    <location>
        <begin position="207"/>
        <end position="424"/>
    </location>
</feature>
<feature type="compositionally biased region" description="Low complexity" evidence="2">
    <location>
        <begin position="222"/>
        <end position="231"/>
    </location>
</feature>
<feature type="compositionally biased region" description="Pro residues" evidence="2">
    <location>
        <begin position="232"/>
        <end position="268"/>
    </location>
</feature>
<feature type="compositionally biased region" description="Low complexity" evidence="2">
    <location>
        <begin position="269"/>
        <end position="280"/>
    </location>
</feature>
<feature type="compositionally biased region" description="Low complexity" evidence="2">
    <location>
        <begin position="303"/>
        <end position="323"/>
    </location>
</feature>
<feature type="compositionally biased region" description="Pro residues" evidence="2">
    <location>
        <begin position="332"/>
        <end position="381"/>
    </location>
</feature>
<feature type="compositionally biased region" description="Pro residues" evidence="2">
    <location>
        <begin position="388"/>
        <end position="424"/>
    </location>
</feature>
<feature type="modified residue" description="N-acetylalanine" evidence="14 21 22 23">
    <location>
        <position position="2"/>
    </location>
</feature>
<feature type="modified residue" description="Phosphotyrosine" evidence="20">
    <location>
        <position position="56"/>
    </location>
</feature>
<feature type="strand" evidence="24">
    <location>
        <begin position="13"/>
        <end position="18"/>
    </location>
</feature>
<feature type="strand" evidence="26">
    <location>
        <begin position="22"/>
        <end position="24"/>
    </location>
</feature>
<feature type="helix" evidence="24">
    <location>
        <begin position="26"/>
        <end position="32"/>
    </location>
</feature>
<feature type="turn" evidence="24">
    <location>
        <begin position="34"/>
        <end position="36"/>
    </location>
</feature>
<feature type="strand" evidence="24">
    <location>
        <begin position="39"/>
        <end position="43"/>
    </location>
</feature>
<feature type="strand" evidence="24">
    <location>
        <begin position="48"/>
        <end position="50"/>
    </location>
</feature>
<feature type="strand" evidence="24">
    <location>
        <begin position="55"/>
        <end position="63"/>
    </location>
</feature>
<feature type="helix" evidence="24">
    <location>
        <begin position="64"/>
        <end position="73"/>
    </location>
</feature>
<feature type="helix" evidence="25">
    <location>
        <begin position="74"/>
        <end position="76"/>
    </location>
</feature>
<feature type="strand" evidence="24">
    <location>
        <begin position="77"/>
        <end position="79"/>
    </location>
</feature>
<feature type="strand" evidence="24">
    <location>
        <begin position="82"/>
        <end position="88"/>
    </location>
</feature>
<feature type="strand" evidence="24">
    <location>
        <begin position="102"/>
        <end position="106"/>
    </location>
</feature>
<feature type="helix" evidence="24">
    <location>
        <begin position="113"/>
        <end position="120"/>
    </location>
</feature>
<feature type="turn" evidence="24">
    <location>
        <begin position="121"/>
        <end position="123"/>
    </location>
</feature>
<feature type="strand" evidence="24">
    <location>
        <begin position="126"/>
        <end position="128"/>
    </location>
</feature>
<feature type="strand" evidence="24">
    <location>
        <begin position="136"/>
        <end position="138"/>
    </location>
</feature>
<feature type="strand" evidence="24">
    <location>
        <begin position="143"/>
        <end position="147"/>
    </location>
</feature>
<feature type="strand" evidence="24">
    <location>
        <begin position="149"/>
        <end position="151"/>
    </location>
</feature>
<feature type="helix" evidence="24">
    <location>
        <begin position="152"/>
        <end position="160"/>
    </location>
</feature>
<feature type="turn" evidence="24">
    <location>
        <begin position="161"/>
        <end position="164"/>
    </location>
</feature>
<feature type="strand" evidence="24">
    <location>
        <begin position="168"/>
        <end position="171"/>
    </location>
</feature>
<feature type="strand" evidence="24">
    <location>
        <begin position="173"/>
        <end position="177"/>
    </location>
</feature>
<protein>
    <recommendedName>
        <fullName>Splicing factor 3B subunit 4</fullName>
    </recommendedName>
    <alternativeName>
        <fullName>Pre-mRNA-splicing factor SF3b 49 kDa subunit</fullName>
    </alternativeName>
    <alternativeName>
        <fullName>Spliceosome-associated protein 49</fullName>
        <shortName>SAP 49</shortName>
    </alternativeName>
</protein>
<name>SF3B4_HUMAN</name>
<comment type="function">
    <text evidence="3 4 6 9 11 12">Component of the 17S U2 SnRNP complex of the spliceosome, a large ribonucleoprotein complex that removes introns from transcribed pre-mRNAs (PubMed:10882114, PubMed:12234937, PubMed:27720643, PubMed:32494006). The 17S U2 SnRNP complex (1) directly participates in early spliceosome assembly and (2) mediates recognition of the intron branch site during pre-mRNA splicing by promoting the selection of the pre-mRNA branch-site adenosine, the nucleophile for the first step of splicing (PubMed:12234937, PubMed:32494006). Within the 17S U2 SnRNP complex, SF3B4 is part of the SF3B subcomplex, which is required for 'A' complex assembly formed by the stable binding of U2 snRNP to the branchpoint sequence in pre-mRNA (PubMed:12234937, PubMed:27720643). Sequence independent binding of SF3A and SF3B subcomplexes upstream of the branch site is essential, it may anchor U2 snRNP to the pre-mRNA (PubMed:12234937). May also be involved in the assembly of the 'E' complex (PubMed:10882114). Also acts as a component of the minor spliceosome, which is involved in the splicing of U12-type introns in pre-mRNAs (PubMed:15146077, PubMed:33509932).</text>
</comment>
<comment type="subunit">
    <text evidence="3 4 5 6 8 9 10 11 12 13">Component of the 17S U2 SnRNP complex, a ribonucleoprotein complex that contains small nuclear RNA (snRNA) U2 and a number of specific proteins (PubMed:12234937, PubMed:15146077, PubMed:32494006, PubMed:36797247). Part of the SF3B subcomplex of the 17S U2 SnRNP complex (PubMed:12234937, PubMed:12738865, PubMed:27720643, PubMed:28541300). SF3B associates with the splicing subcomplex SF3A and a 12S RNA unit to form the U2 small nuclear ribonucleoproteins complex (U2 snRNP) (PubMed:12234937). SF3B4 has been found in complex spliceosome 'B' and 'C' as well (PubMed:10882114). Component of the minor (U12-type spliceosome) spliceosome (PubMed:15146077, PubMed:33509932). Found in a complex with PRMT9, SF3B2 and SF3B4 (PubMed:25737013).</text>
</comment>
<comment type="interaction">
    <interactant intactId="EBI-348469">
        <id>Q15427</id>
    </interactant>
    <interactant intactId="EBI-747185">
        <id>O95817</id>
        <label>BAG3</label>
    </interactant>
    <organismsDiffer>false</organismsDiffer>
    <experiments>6</experiments>
</comment>
<comment type="interaction">
    <interactant intactId="EBI-348469">
        <id>Q15427</id>
    </interactant>
    <interactant intactId="EBI-525456">
        <id>Q9UQB8</id>
        <label>BAIAP2</label>
    </interactant>
    <organismsDiffer>false</organismsDiffer>
    <experiments>3</experiments>
</comment>
<comment type="interaction">
    <interactant intactId="EBI-348469">
        <id>Q15427</id>
    </interactant>
    <interactant intactId="EBI-1050106">
        <id>O75934</id>
        <label>BCAS2</label>
    </interactant>
    <organismsDiffer>false</organismsDiffer>
    <experiments>2</experiments>
</comment>
<comment type="interaction">
    <interactant intactId="EBI-348469">
        <id>Q15427</id>
    </interactant>
    <interactant intactId="EBI-768015">
        <id>O95400</id>
        <label>CD2BP2</label>
    </interactant>
    <organismsDiffer>false</organismsDiffer>
    <experiments>2</experiments>
</comment>
<comment type="interaction">
    <interactant intactId="EBI-348469">
        <id>Q15427</id>
    </interactant>
    <interactant intactId="EBI-5453285">
        <id>Q2TBE0</id>
        <label>CWF19L2</label>
    </interactant>
    <organismsDiffer>false</organismsDiffer>
    <experiments>6</experiments>
</comment>
<comment type="interaction">
    <interactant intactId="EBI-348469">
        <id>Q15427</id>
    </interactant>
    <interactant intactId="EBI-722353">
        <id>Q86XP3</id>
        <label>DDX42</label>
    </interactant>
    <organismsDiffer>false</organismsDiffer>
    <experiments>3</experiments>
</comment>
<comment type="interaction">
    <interactant intactId="EBI-348469">
        <id>Q15427</id>
    </interactant>
    <interactant intactId="EBI-357897">
        <id>Q15029</id>
        <label>EFTUD2</label>
    </interactant>
    <organismsDiffer>false</organismsDiffer>
    <experiments>2</experiments>
</comment>
<comment type="interaction">
    <interactant intactId="EBI-348469">
        <id>Q15427</id>
    </interactant>
    <interactant intactId="EBI-10226858">
        <id>Q0VDC6</id>
        <label>FKBP1A</label>
    </interactant>
    <organismsDiffer>false</organismsDiffer>
    <experiments>3</experiments>
</comment>
<comment type="interaction">
    <interactant intactId="EBI-348469">
        <id>Q15427</id>
    </interactant>
    <interactant intactId="EBI-1383583">
        <id>P42685</id>
        <label>FRK</label>
    </interactant>
    <organismsDiffer>false</organismsDiffer>
    <experiments>4</experiments>
</comment>
<comment type="interaction">
    <interactant intactId="EBI-348469">
        <id>Q15427</id>
    </interactant>
    <interactant intactId="EBI-401755">
        <id>P62993</id>
        <label>GRB2</label>
    </interactant>
    <organismsDiffer>false</organismsDiffer>
    <experiments>3</experiments>
</comment>
<comment type="interaction">
    <interactant intactId="EBI-348469">
        <id>Q15427</id>
    </interactant>
    <interactant intactId="EBI-1018153">
        <id>Q9BUJ2</id>
        <label>HNRNPUL1</label>
    </interactant>
    <organismsDiffer>false</organismsDiffer>
    <experiments>5</experiments>
</comment>
<comment type="interaction">
    <interactant intactId="EBI-348469">
        <id>Q15427</id>
    </interactant>
    <interactant intactId="EBI-739361">
        <id>Q9UBY9</id>
        <label>HSPB7</label>
    </interactant>
    <organismsDiffer>false</organismsDiffer>
    <experiments>3</experiments>
</comment>
<comment type="interaction">
    <interactant intactId="EBI-348469">
        <id>Q15427</id>
    </interactant>
    <interactant intactId="EBI-713568">
        <id>P45984</id>
        <label>MAPK9</label>
    </interactant>
    <organismsDiffer>false</organismsDiffer>
    <experiments>7</experiments>
</comment>
<comment type="interaction">
    <interactant intactId="EBI-348469">
        <id>Q15427</id>
    </interactant>
    <interactant intactId="EBI-749353">
        <id>Q9H7H0</id>
        <label>METTL17</label>
    </interactant>
    <organismsDiffer>false</organismsDiffer>
    <experiments>4</experiments>
</comment>
<comment type="interaction">
    <interactant intactId="EBI-348469">
        <id>Q15427</id>
    </interactant>
    <interactant intactId="EBI-713635">
        <id>O43639</id>
        <label>NCK2</label>
    </interactant>
    <organismsDiffer>false</organismsDiffer>
    <experiments>7</experiments>
</comment>
<comment type="interaction">
    <interactant intactId="EBI-348469">
        <id>Q15427</id>
    </interactant>
    <interactant intactId="EBI-3936907">
        <id>Q9Y5A7</id>
        <label>NUB1</label>
    </interactant>
    <organismsDiffer>false</organismsDiffer>
    <experiments>3</experiments>
</comment>
<comment type="interaction">
    <interactant intactId="EBI-348469">
        <id>Q15427</id>
    </interactant>
    <interactant intactId="EBI-10293968">
        <id>Q96T49</id>
        <label>PPP1R16B</label>
    </interactant>
    <organismsDiffer>false</organismsDiffer>
    <experiments>4</experiments>
</comment>
<comment type="interaction">
    <interactant intactId="EBI-348469">
        <id>Q15427</id>
    </interactant>
    <interactant intactId="EBI-10962083">
        <id>Q6P2P2</id>
        <label>PRMT9</label>
    </interactant>
    <organismsDiffer>false</organismsDiffer>
    <experiments>5</experiments>
</comment>
<comment type="interaction">
    <interactant intactId="EBI-348469">
        <id>Q15427</id>
    </interactant>
    <interactant intactId="EBI-538479">
        <id>Q6P2Q9</id>
        <label>PRPF8</label>
    </interactant>
    <organismsDiffer>false</organismsDiffer>
    <experiments>2</experiments>
</comment>
<comment type="interaction">
    <interactant intactId="EBI-348469">
        <id>Q15427</id>
    </interactant>
    <interactant intactId="EBI-347462">
        <id>P47897</id>
        <label>QARS1</label>
    </interactant>
    <organismsDiffer>false</organismsDiffer>
    <experiments>3</experiments>
</comment>
<comment type="interaction">
    <interactant intactId="EBI-348469">
        <id>Q15427</id>
    </interactant>
    <interactant intactId="EBI-744023">
        <id>Q9BTL3</id>
        <label>RAMAC</label>
    </interactant>
    <organismsDiffer>false</organismsDiffer>
    <experiments>3</experiments>
</comment>
<comment type="interaction">
    <interactant intactId="EBI-348469">
        <id>Q15427</id>
    </interactant>
    <interactant intactId="EBI-721525">
        <id>P98175</id>
        <label>RBM10</label>
    </interactant>
    <organismsDiffer>false</organismsDiffer>
    <experiments>8</experiments>
</comment>
<comment type="interaction">
    <interactant intactId="EBI-348469">
        <id>Q15427</id>
    </interactant>
    <interactant intactId="EBI-395290">
        <id>Q14498</id>
        <label>RBM39</label>
    </interactant>
    <organismsDiffer>false</organismsDiffer>
    <experiments>4</experiments>
</comment>
<comment type="interaction">
    <interactant intactId="EBI-348469">
        <id>Q15427</id>
    </interactant>
    <interactant intactId="EBI-366570">
        <id>Q9BUL9</id>
        <label>RPP25</label>
    </interactant>
    <organismsDiffer>false</organismsDiffer>
    <experiments>3</experiments>
</comment>
<comment type="interaction">
    <interactant intactId="EBI-348469">
        <id>Q15427</id>
    </interactant>
    <interactant intactId="EBI-748817">
        <id>O94855</id>
        <label>SEC24D</label>
    </interactant>
    <organismsDiffer>false</organismsDiffer>
    <experiments>3</experiments>
</comment>
<comment type="interaction">
    <interactant intactId="EBI-348469">
        <id>Q15427</id>
    </interactant>
    <interactant intactId="EBI-2462271">
        <id>Q15428</id>
        <label>SF3A2</label>
    </interactant>
    <organismsDiffer>false</organismsDiffer>
    <experiments>2</experiments>
</comment>
<comment type="interaction">
    <interactant intactId="EBI-348469">
        <id>Q15427</id>
    </interactant>
    <interactant intactId="EBI-10177154">
        <id>E9PPJ0</id>
        <label>SF3B2</label>
    </interactant>
    <organismsDiffer>false</organismsDiffer>
    <experiments>3</experiments>
</comment>
<comment type="interaction">
    <interactant intactId="EBI-348469">
        <id>Q15427</id>
    </interactant>
    <interactant intactId="EBI-749111">
        <id>Q13435</id>
        <label>SF3B2</label>
    </interactant>
    <organismsDiffer>false</organismsDiffer>
    <experiments>11</experiments>
</comment>
<comment type="interaction">
    <interactant intactId="EBI-348469">
        <id>Q15427</id>
    </interactant>
    <interactant intactId="EBI-744674">
        <id>O75177</id>
        <label>SS18L1</label>
    </interactant>
    <organismsDiffer>false</organismsDiffer>
    <experiments>4</experiments>
</comment>
<comment type="interaction">
    <interactant intactId="EBI-348469">
        <id>Q15427</id>
    </interactant>
    <interactant intactId="EBI-12035119">
        <id>O75177-5</id>
        <label>SS18L1</label>
    </interactant>
    <organismsDiffer>false</organismsDiffer>
    <experiments>3</experiments>
</comment>
<comment type="interaction">
    <interactant intactId="EBI-348469">
        <id>Q15427</id>
    </interactant>
    <interactant intactId="EBI-750484">
        <id>Q9Y4C2</id>
        <label>TCAF1</label>
    </interactant>
    <organismsDiffer>false</organismsDiffer>
    <experiments>5</experiments>
</comment>
<comment type="interaction">
    <interactant intactId="EBI-348469">
        <id>Q15427</id>
    </interactant>
    <interactant intactId="EBI-11974855">
        <id>Q9Y4C2-2</id>
        <label>TCAF1</label>
    </interactant>
    <organismsDiffer>false</organismsDiffer>
    <experiments>3</experiments>
</comment>
<comment type="interaction">
    <interactant intactId="EBI-348469">
        <id>Q15427</id>
    </interactant>
    <interactant intactId="EBI-357061">
        <id>Q92734</id>
        <label>TFG</label>
    </interactant>
    <organismsDiffer>false</organismsDiffer>
    <experiments>3</experiments>
</comment>
<comment type="interaction">
    <interactant intactId="EBI-348469">
        <id>Q15427</id>
    </interactant>
    <interactant intactId="EBI-11741437">
        <id>Q08117-2</id>
        <label>TLE5</label>
    </interactant>
    <organismsDiffer>false</organismsDiffer>
    <experiments>3</experiments>
</comment>
<comment type="interaction">
    <interactant intactId="EBI-348469">
        <id>Q15427</id>
    </interactant>
    <interactant intactId="EBI-3650647">
        <id>Q9BUZ4</id>
        <label>TRAF4</label>
    </interactant>
    <organismsDiffer>false</organismsDiffer>
    <experiments>3</experiments>
</comment>
<comment type="interaction">
    <interactant intactId="EBI-348469">
        <id>Q15427</id>
    </interactant>
    <interactant intactId="EBI-2105393">
        <id>P57075</id>
        <label>UBASH3A</label>
    </interactant>
    <organismsDiffer>false</organismsDiffer>
    <experiments>3</experiments>
</comment>
<comment type="interaction">
    <interactant intactId="EBI-348469">
        <id>Q15427</id>
    </interactant>
    <interactant intactId="EBI-7705033">
        <id>Q9BRX9</id>
        <label>WDR83</label>
    </interactant>
    <organismsDiffer>false</organismsDiffer>
    <experiments>2</experiments>
</comment>
<comment type="interaction">
    <interactant intactId="EBI-348469">
        <id>Q15427</id>
    </interactant>
    <interactant intactId="EBI-597063">
        <id>Q8TBK6</id>
        <label>ZCCHC10</label>
    </interactant>
    <organismsDiffer>false</organismsDiffer>
    <experiments>3</experiments>
</comment>
<comment type="interaction">
    <interactant intactId="EBI-348469">
        <id>Q15427</id>
    </interactant>
    <interactant intactId="EBI-1640965">
        <id>P17036</id>
        <label>ZNF3</label>
    </interactant>
    <organismsDiffer>false</organismsDiffer>
    <experiments>3</experiments>
</comment>
<comment type="interaction">
    <interactant intactId="EBI-348469">
        <id>Q15427</id>
    </interactant>
    <interactant intactId="EBI-12006434">
        <id>Q96MX3</id>
        <label>ZNF48</label>
    </interactant>
    <organismsDiffer>false</organismsDiffer>
    <experiments>3</experiments>
</comment>
<comment type="interaction">
    <interactant intactId="EBI-348469">
        <id>Q15427</id>
    </interactant>
    <interactant intactId="EBI-25475920">
        <id>PRO_0000449631</id>
        <label>rep</label>
        <dbReference type="UniProtKB" id="P0DTD1"/>
    </interactant>
    <organismsDiffer>true</organismsDiffer>
    <experiments>3</experiments>
</comment>
<comment type="subcellular location">
    <subcellularLocation>
        <location evidence="9 10">Nucleus</location>
    </subcellularLocation>
</comment>
<comment type="disease" evidence="7">
    <disease id="DI-03474">
        <name>Acrofacial dysostosis 1, Nager type</name>
        <acronym>AFD1</acronym>
        <description>A form of acrofacial dysostosis, a group of disorders which are characterized by malformation of the craniofacial skeleton and the limbs. The major facial features of AFD1 include downslanted palpebral fissures, midface retrusion, and micrognathia, the latter of which often requires the placement of a tracheostomy in early childhood. Limb defects typically involve the anterior (radial) elements of the upper limbs and manifest as small or absent thumbs, triphalangeal thumbs, radial hyoplasia or aplasia, and radioulnar synostosis. Phocomelia of the upper limbs and, occasionally, lower-limb defects have also been reported.</description>
        <dbReference type="MIM" id="154400"/>
    </disease>
    <text>The disease is caused by variants affecting the gene represented in this entry.</text>
</comment>
<comment type="similarity">
    <text evidence="15">Belongs to the SF3B4 family.</text>
</comment>
<reference key="1">
    <citation type="journal article" date="1994" name="Genes Dev.">
        <title>The prespliceosome components SAP 49 and SAP 145 interact in a complex implicated in tethering U2 snRNP to the branch site.</title>
        <authorList>
            <person name="Champion-Arnaud P."/>
            <person name="Reed R."/>
        </authorList>
    </citation>
    <scope>NUCLEOTIDE SEQUENCE [GENOMIC DNA]</scope>
</reference>
<reference key="2">
    <citation type="journal article" date="2006" name="Nature">
        <title>The DNA sequence and biological annotation of human chromosome 1.</title>
        <authorList>
            <person name="Gregory S.G."/>
            <person name="Barlow K.F."/>
            <person name="McLay K.E."/>
            <person name="Kaul R."/>
            <person name="Swarbreck D."/>
            <person name="Dunham A."/>
            <person name="Scott C.E."/>
            <person name="Howe K.L."/>
            <person name="Woodfine K."/>
            <person name="Spencer C.C.A."/>
            <person name="Jones M.C."/>
            <person name="Gillson C."/>
            <person name="Searle S."/>
            <person name="Zhou Y."/>
            <person name="Kokocinski F."/>
            <person name="McDonald L."/>
            <person name="Evans R."/>
            <person name="Phillips K."/>
            <person name="Atkinson A."/>
            <person name="Cooper R."/>
            <person name="Jones C."/>
            <person name="Hall R.E."/>
            <person name="Andrews T.D."/>
            <person name="Lloyd C."/>
            <person name="Ainscough R."/>
            <person name="Almeida J.P."/>
            <person name="Ambrose K.D."/>
            <person name="Anderson F."/>
            <person name="Andrew R.W."/>
            <person name="Ashwell R.I.S."/>
            <person name="Aubin K."/>
            <person name="Babbage A.K."/>
            <person name="Bagguley C.L."/>
            <person name="Bailey J."/>
            <person name="Beasley H."/>
            <person name="Bethel G."/>
            <person name="Bird C.P."/>
            <person name="Bray-Allen S."/>
            <person name="Brown J.Y."/>
            <person name="Brown A.J."/>
            <person name="Buckley D."/>
            <person name="Burton J."/>
            <person name="Bye J."/>
            <person name="Carder C."/>
            <person name="Chapman J.C."/>
            <person name="Clark S.Y."/>
            <person name="Clarke G."/>
            <person name="Clee C."/>
            <person name="Cobley V."/>
            <person name="Collier R.E."/>
            <person name="Corby N."/>
            <person name="Coville G.J."/>
            <person name="Davies J."/>
            <person name="Deadman R."/>
            <person name="Dunn M."/>
            <person name="Earthrowl M."/>
            <person name="Ellington A.G."/>
            <person name="Errington H."/>
            <person name="Frankish A."/>
            <person name="Frankland J."/>
            <person name="French L."/>
            <person name="Garner P."/>
            <person name="Garnett J."/>
            <person name="Gay L."/>
            <person name="Ghori M.R.J."/>
            <person name="Gibson R."/>
            <person name="Gilby L.M."/>
            <person name="Gillett W."/>
            <person name="Glithero R.J."/>
            <person name="Grafham D.V."/>
            <person name="Griffiths C."/>
            <person name="Griffiths-Jones S."/>
            <person name="Grocock R."/>
            <person name="Hammond S."/>
            <person name="Harrison E.S.I."/>
            <person name="Hart E."/>
            <person name="Haugen E."/>
            <person name="Heath P.D."/>
            <person name="Holmes S."/>
            <person name="Holt K."/>
            <person name="Howden P.J."/>
            <person name="Hunt A.R."/>
            <person name="Hunt S.E."/>
            <person name="Hunter G."/>
            <person name="Isherwood J."/>
            <person name="James R."/>
            <person name="Johnson C."/>
            <person name="Johnson D."/>
            <person name="Joy A."/>
            <person name="Kay M."/>
            <person name="Kershaw J.K."/>
            <person name="Kibukawa M."/>
            <person name="Kimberley A.M."/>
            <person name="King A."/>
            <person name="Knights A.J."/>
            <person name="Lad H."/>
            <person name="Laird G."/>
            <person name="Lawlor S."/>
            <person name="Leongamornlert D.A."/>
            <person name="Lloyd D.M."/>
            <person name="Loveland J."/>
            <person name="Lovell J."/>
            <person name="Lush M.J."/>
            <person name="Lyne R."/>
            <person name="Martin S."/>
            <person name="Mashreghi-Mohammadi M."/>
            <person name="Matthews L."/>
            <person name="Matthews N.S.W."/>
            <person name="McLaren S."/>
            <person name="Milne S."/>
            <person name="Mistry S."/>
            <person name="Moore M.J.F."/>
            <person name="Nickerson T."/>
            <person name="O'Dell C.N."/>
            <person name="Oliver K."/>
            <person name="Palmeiri A."/>
            <person name="Palmer S.A."/>
            <person name="Parker A."/>
            <person name="Patel D."/>
            <person name="Pearce A.V."/>
            <person name="Peck A.I."/>
            <person name="Pelan S."/>
            <person name="Phelps K."/>
            <person name="Phillimore B.J."/>
            <person name="Plumb R."/>
            <person name="Rajan J."/>
            <person name="Raymond C."/>
            <person name="Rouse G."/>
            <person name="Saenphimmachak C."/>
            <person name="Sehra H.K."/>
            <person name="Sheridan E."/>
            <person name="Shownkeen R."/>
            <person name="Sims S."/>
            <person name="Skuce C.D."/>
            <person name="Smith M."/>
            <person name="Steward C."/>
            <person name="Subramanian S."/>
            <person name="Sycamore N."/>
            <person name="Tracey A."/>
            <person name="Tromans A."/>
            <person name="Van Helmond Z."/>
            <person name="Wall M."/>
            <person name="Wallis J.M."/>
            <person name="White S."/>
            <person name="Whitehead S.L."/>
            <person name="Wilkinson J.E."/>
            <person name="Willey D.L."/>
            <person name="Williams H."/>
            <person name="Wilming L."/>
            <person name="Wray P.W."/>
            <person name="Wu Z."/>
            <person name="Coulson A."/>
            <person name="Vaudin M."/>
            <person name="Sulston J.E."/>
            <person name="Durbin R.M."/>
            <person name="Hubbard T."/>
            <person name="Wooster R."/>
            <person name="Dunham I."/>
            <person name="Carter N.P."/>
            <person name="McVean G."/>
            <person name="Ross M.T."/>
            <person name="Harrow J."/>
            <person name="Olson M.V."/>
            <person name="Beck S."/>
            <person name="Rogers J."/>
            <person name="Bentley D.R."/>
        </authorList>
    </citation>
    <scope>NUCLEOTIDE SEQUENCE [LARGE SCALE GENOMIC DNA]</scope>
</reference>
<reference key="3">
    <citation type="submission" date="2005-09" db="EMBL/GenBank/DDBJ databases">
        <authorList>
            <person name="Mural R.J."/>
            <person name="Istrail S."/>
            <person name="Sutton G.G."/>
            <person name="Florea L."/>
            <person name="Halpern A.L."/>
            <person name="Mobarry C.M."/>
            <person name="Lippert R."/>
            <person name="Walenz B."/>
            <person name="Shatkay H."/>
            <person name="Dew I."/>
            <person name="Miller J.R."/>
            <person name="Flanigan M.J."/>
            <person name="Edwards N.J."/>
            <person name="Bolanos R."/>
            <person name="Fasulo D."/>
            <person name="Halldorsson B.V."/>
            <person name="Hannenhalli S."/>
            <person name="Turner R."/>
            <person name="Yooseph S."/>
            <person name="Lu F."/>
            <person name="Nusskern D.R."/>
            <person name="Shue B.C."/>
            <person name="Zheng X.H."/>
            <person name="Zhong F."/>
            <person name="Delcher A.L."/>
            <person name="Huson D.H."/>
            <person name="Kravitz S.A."/>
            <person name="Mouchard L."/>
            <person name="Reinert K."/>
            <person name="Remington K.A."/>
            <person name="Clark A.G."/>
            <person name="Waterman M.S."/>
            <person name="Eichler E.E."/>
            <person name="Adams M.D."/>
            <person name="Hunkapiller M.W."/>
            <person name="Myers E.W."/>
            <person name="Venter J.C."/>
        </authorList>
    </citation>
    <scope>NUCLEOTIDE SEQUENCE [LARGE SCALE GENOMIC DNA]</scope>
</reference>
<reference key="4">
    <citation type="journal article" date="2004" name="Genome Res.">
        <title>The status, quality, and expansion of the NIH full-length cDNA project: the Mammalian Gene Collection (MGC).</title>
        <authorList>
            <consortium name="The MGC Project Team"/>
        </authorList>
    </citation>
    <scope>NUCLEOTIDE SEQUENCE [LARGE SCALE MRNA]</scope>
    <source>
        <tissue>Skin</tissue>
        <tissue>Testis</tissue>
    </source>
</reference>
<reference key="5">
    <citation type="submission" date="2008-12" db="UniProtKB">
        <authorList>
            <person name="Bienvenut W.V."/>
            <person name="Lilla S."/>
            <person name="von Kriegsheim A."/>
            <person name="Lempens A."/>
            <person name="Kolch W."/>
        </authorList>
    </citation>
    <scope>PROTEIN SEQUENCE OF 2-23</scope>
    <scope>CLEAVAGE OF INITIATOR METHIONINE</scope>
    <scope>ACETYLATION AT ALA-2</scope>
    <scope>IDENTIFICATION BY MASS SPECTROMETRY</scope>
    <source>
        <tissue>Ovarian carcinoma</tissue>
    </source>
</reference>
<reference key="6">
    <citation type="journal article" date="2000" name="Mol. Cell">
        <title>Functional association of U2 snRNP with the ATP-independent spliceosomal complex E.</title>
        <authorList>
            <person name="Das R."/>
            <person name="Zhou Z."/>
            <person name="Reed R."/>
        </authorList>
    </citation>
    <scope>CHARACTERIZATION OF THE SPLICEOSOME</scope>
</reference>
<reference key="7">
    <citation type="journal article" date="2002" name="EMBO J.">
        <title>Characterization of novel SF3b and 17S U2 snRNP proteins, including a human Prp5p homologue and an SF3b DEAD-box protein.</title>
        <authorList>
            <person name="Will C.L."/>
            <person name="Urlaub H."/>
            <person name="Achsel T."/>
            <person name="Gentzel M."/>
            <person name="Wilm M."/>
            <person name="Luehrmann R."/>
        </authorList>
    </citation>
    <scope>IDENTIFICATION IN THE SF3B COMPLEX</scope>
</reference>
<reference key="8">
    <citation type="journal article" date="2003" name="Science">
        <title>Molecular architecture of the multiprotein splicing factor SF3b.</title>
        <authorList>
            <person name="Golas M.M."/>
            <person name="Sander B."/>
            <person name="Will C.L."/>
            <person name="Luhrmann R."/>
            <person name="Stark H."/>
        </authorList>
    </citation>
    <scope>IDENTIFICATION IN THE SF3B COMPLEX</scope>
    <scope>ELECTRON MICROSCOPY OF THE SF3B COMPLEX</scope>
</reference>
<reference key="9">
    <citation type="journal article" date="2004" name="RNA">
        <title>The human 18S U11/U12 snRNP contains a set of novel proteins not found in the U2-dependent spliceosome.</title>
        <authorList>
            <person name="Will C.L."/>
            <person name="Schneider C."/>
            <person name="Hossbach M."/>
            <person name="Urlaub H."/>
            <person name="Rauhut R."/>
            <person name="Elbashir S."/>
            <person name="Tuschl T."/>
            <person name="Luehrmann R."/>
        </authorList>
    </citation>
    <scope>IDENTIFICATION IN A COMPLEX WITH THE MINOR SPLICEOSOME</scope>
    <scope>FUNCTION</scope>
    <scope>IDENTIFICATION BY MASS SPECTROMETRY</scope>
</reference>
<reference key="10">
    <citation type="journal article" date="2005" name="Nat. Biotechnol.">
        <title>Immunoaffinity profiling of tyrosine phosphorylation in cancer cells.</title>
        <authorList>
            <person name="Rush J."/>
            <person name="Moritz A."/>
            <person name="Lee K.A."/>
            <person name="Guo A."/>
            <person name="Goss V.L."/>
            <person name="Spek E.J."/>
            <person name="Zhang H."/>
            <person name="Zha X.-M."/>
            <person name="Polakiewicz R.D."/>
            <person name="Comb M.J."/>
        </authorList>
    </citation>
    <scope>PHOSPHORYLATION [LARGE SCALE ANALYSIS] AT TYR-56</scope>
    <scope>IDENTIFICATION BY MASS SPECTROMETRY [LARGE SCALE ANALYSIS]</scope>
</reference>
<reference key="11">
    <citation type="journal article" date="2009" name="Anal. Chem.">
        <title>Lys-N and trypsin cover complementary parts of the phosphoproteome in a refined SCX-based approach.</title>
        <authorList>
            <person name="Gauci S."/>
            <person name="Helbig A.O."/>
            <person name="Slijper M."/>
            <person name="Krijgsveld J."/>
            <person name="Heck A.J."/>
            <person name="Mohammed S."/>
        </authorList>
    </citation>
    <scope>ACETYLATION [LARGE SCALE ANALYSIS] AT ALA-2</scope>
    <scope>CLEAVAGE OF INITIATOR METHIONINE [LARGE SCALE ANALYSIS]</scope>
    <scope>IDENTIFICATION BY MASS SPECTROMETRY [LARGE SCALE ANALYSIS]</scope>
</reference>
<reference key="12">
    <citation type="journal article" date="2011" name="BMC Syst. Biol.">
        <title>Initial characterization of the human central proteome.</title>
        <authorList>
            <person name="Burkard T.R."/>
            <person name="Planyavsky M."/>
            <person name="Kaupe I."/>
            <person name="Breitwieser F.P."/>
            <person name="Buerckstuemmer T."/>
            <person name="Bennett K.L."/>
            <person name="Superti-Furga G."/>
            <person name="Colinge J."/>
        </authorList>
    </citation>
    <scope>IDENTIFICATION BY MASS SPECTROMETRY [LARGE SCALE ANALYSIS]</scope>
</reference>
<reference key="13">
    <citation type="journal article" date="2012" name="Am. J. Hum. Genet.">
        <title>Haploinsufficiency of SF3B4, a component of the pre-mRNA spliceosomal complex, causes Nager syndrome.</title>
        <authorList>
            <person name="Bernier F.P."/>
            <person name="Caluseriu O."/>
            <person name="Ng S."/>
            <person name="Schwartzentruber J."/>
            <person name="Buckingham K.J."/>
            <person name="Innes A.M."/>
            <person name="Jabs E.W."/>
            <person name="Innis J.W."/>
            <person name="Schuette J.L."/>
            <person name="Gorski J.L."/>
            <person name="Byers P.H."/>
            <person name="Andelfinger G."/>
            <person name="Siu V."/>
            <person name="Lauzon J."/>
            <person name="Fernandez B.A."/>
            <person name="McMillin M."/>
            <person name="Scott R.H."/>
            <person name="Racher H."/>
            <person name="Majewski J."/>
            <person name="Nickerson D.A."/>
            <person name="Shendure J."/>
            <person name="Bamshad M.J."/>
            <person name="Parboosingh J.S."/>
        </authorList>
    </citation>
    <scope>INVOLVEMENT IN AFD1</scope>
</reference>
<reference key="14">
    <citation type="journal article" date="2012" name="Mol. Cell. Proteomics">
        <title>Comparative large-scale characterisation of plant vs. mammal proteins reveals similar and idiosyncratic N-alpha acetylation features.</title>
        <authorList>
            <person name="Bienvenut W.V."/>
            <person name="Sumpton D."/>
            <person name="Martinez A."/>
            <person name="Lilla S."/>
            <person name="Espagne C."/>
            <person name="Meinnel T."/>
            <person name="Giglione C."/>
        </authorList>
    </citation>
    <scope>ACETYLATION [LARGE SCALE ANALYSIS] AT ALA-2</scope>
    <scope>CLEAVAGE OF INITIATOR METHIONINE [LARGE SCALE ANALYSIS]</scope>
    <scope>IDENTIFICATION BY MASS SPECTROMETRY [LARGE SCALE ANALYSIS]</scope>
</reference>
<reference key="15">
    <citation type="journal article" date="2012" name="Proc. Natl. Acad. Sci. U.S.A.">
        <title>N-terminal acetylome analyses and functional insights of the N-terminal acetyltransferase NatB.</title>
        <authorList>
            <person name="Van Damme P."/>
            <person name="Lasa M."/>
            <person name="Polevoda B."/>
            <person name="Gazquez C."/>
            <person name="Elosegui-Artola A."/>
            <person name="Kim D.S."/>
            <person name="De Juan-Pardo E."/>
            <person name="Demeyer K."/>
            <person name="Hole K."/>
            <person name="Larrea E."/>
            <person name="Timmerman E."/>
            <person name="Prieto J."/>
            <person name="Arnesen T."/>
            <person name="Sherman F."/>
            <person name="Gevaert K."/>
            <person name="Aldabe R."/>
        </authorList>
    </citation>
    <scope>ACETYLATION [LARGE SCALE ANALYSIS] AT ALA-2</scope>
    <scope>CLEAVAGE OF INITIATOR METHIONINE [LARGE SCALE ANALYSIS]</scope>
    <scope>IDENTIFICATION BY MASS SPECTROMETRY [LARGE SCALE ANALYSIS]</scope>
</reference>
<reference key="16">
    <citation type="submission" date="2005-11" db="PDB data bank">
        <title>Solution structure of RRM domains in splicing factor 3B.</title>
        <authorList>
            <consortium name="RIKEN structural genomics initiative (RSGI)"/>
        </authorList>
    </citation>
    <scope>STRUCTURE BY NMR OF 4-184</scope>
</reference>
<reference key="17">
    <citation type="journal article" date="2015" name="Nat. Commun.">
        <title>PRMT9 is a type II methyltransferase that methylates the splicing factor SAP145.</title>
        <authorList>
            <person name="Yang Y."/>
            <person name="Hadjikyriacou A."/>
            <person name="Xia Z."/>
            <person name="Gayatri S."/>
            <person name="Kim D."/>
            <person name="Zurita-Lopez C."/>
            <person name="Kelly R."/>
            <person name="Guo A."/>
            <person name="Li W."/>
            <person name="Clarke S.G."/>
            <person name="Bedford M.T."/>
        </authorList>
    </citation>
    <scope>IDENTIFICATION IN A COMPLEX WITH PRMT9; SF3B2 AND SF3B4</scope>
</reference>
<reference key="18">
    <citation type="journal article" date="2016" name="Mol. Cell">
        <title>Molecular architecture of SF3b and structural consequences of its cancer-related mutations.</title>
        <authorList>
            <person name="Cretu C."/>
            <person name="Schmitzova J."/>
            <person name="Ponce-Salvatierra A."/>
            <person name="Dybkov O."/>
            <person name="De Laurentiis E.I."/>
            <person name="Sharma K."/>
            <person name="Will C.L."/>
            <person name="Urlaub H."/>
            <person name="Luehrmann R."/>
            <person name="Pena V."/>
        </authorList>
    </citation>
    <scope>FUNCTION</scope>
    <scope>IDENTIFICATION IN THE SF3B COMPLEX</scope>
    <scope>SUBUNIT</scope>
    <scope>SUBCELLULAR LOCATION</scope>
</reference>
<reference key="19">
    <citation type="journal article" date="2017" name="Nat. Commun.">
        <title>Splicing modulators act at the branch point adenosine binding pocket defined by the PHF5A-SF3b complex.</title>
        <authorList>
            <person name="Teng T."/>
            <person name="Tsai J.H."/>
            <person name="Puyang X."/>
            <person name="Seiler M."/>
            <person name="Peng S."/>
            <person name="Prajapati S."/>
            <person name="Aird D."/>
            <person name="Buonamici S."/>
            <person name="Caleb B."/>
            <person name="Chan B."/>
            <person name="Corson L."/>
            <person name="Feala J."/>
            <person name="Fekkes P."/>
            <person name="Gerard B."/>
            <person name="Karr C."/>
            <person name="Korpal M."/>
            <person name="Liu X."/>
            <person name="Lowe J.T."/>
            <person name="Mizui Y."/>
            <person name="Palacino J."/>
            <person name="Park E."/>
            <person name="Smith P.G."/>
            <person name="Subramanian V."/>
            <person name="Wu Z.J."/>
            <person name="Zou J."/>
            <person name="Yu L."/>
            <person name="Chicas A."/>
            <person name="Warmuth M."/>
            <person name="Larsen N."/>
            <person name="Zhu P."/>
        </authorList>
    </citation>
    <scope>IDENTIFICATION IN THE SF3B COMPLEX</scope>
    <scope>SUBCELLULAR LOCATION</scope>
</reference>
<reference evidence="16 17" key="20">
    <citation type="journal article" date="2020" name="Nature">
        <title>Molecular architecture of the human 17S U2 snRNP.</title>
        <authorList>
            <person name="Zhang Z."/>
            <person name="Will C.L."/>
            <person name="Bertram K."/>
            <person name="Dybkov O."/>
            <person name="Hartmuth K."/>
            <person name="Agafonov D.E."/>
            <person name="Hofele R."/>
            <person name="Urlaub H."/>
            <person name="Kastner B."/>
            <person name="Luehrmann R."/>
            <person name="Stark H."/>
        </authorList>
    </citation>
    <scope>STRUCTURE BY ELECTRON MICROSCOPY (4.10 ANGSTROMS) IN COMPLEX WITH THE 17S U2 SNRNP COMPLEX</scope>
    <scope>FUNCTION</scope>
    <scope>IDENTIFICATION IN THE 17S U2 SNRNP COMPLEX</scope>
</reference>
<reference evidence="18" key="21">
    <citation type="journal article" date="2021" name="Science">
        <title>Structure of the activated human minor spliceosome.</title>
        <authorList>
            <person name="Bai R."/>
            <person name="Wan R."/>
            <person name="Wang L."/>
            <person name="Xu K."/>
            <person name="Zhang Q."/>
            <person name="Lei J."/>
            <person name="Shi Y."/>
        </authorList>
    </citation>
    <scope>STRUCTURE BY ELECTRON MICROSCOPY (2.89 ANGSTROMS)</scope>
    <scope>FUNCTION</scope>
    <scope>SUBUNIT</scope>
</reference>
<reference evidence="19" key="22">
    <citation type="journal article" date="2023" name="Nat. Commun.">
        <title>Mechanisms of the RNA helicases DDX42 and DDX46 in human U2 snRNP assembly.</title>
        <authorList>
            <person name="Yang F."/>
            <person name="Bian T."/>
            <person name="Zhan X."/>
            <person name="Chen Z."/>
            <person name="Xing Z."/>
            <person name="Larsen N.A."/>
            <person name="Zhang X."/>
            <person name="Shi Y."/>
        </authorList>
    </citation>
    <scope>STRUCTURE BY ELECTRON MICROSCOPY (2.70 ANGSTROMS) IN COMPLEX WITH THE 17S U2 SNRNP COMPLEX</scope>
    <scope>IDENTIFICATION IN THE 17S U2 SNRNP COMPLEX</scope>
</reference>